<sequence>MSTTFPGLVHDAEIRHDGSNSYRLMQLGCLESVANSTVAYSSSSPLTYSTTGTEFASPYFSTNHQYTPLHHQSFHYEFQHSHPAVTPDAYSLNSLHHSQQYYQQIHHGEPTDFINLHNARALKSSCLDEQRRELGCLDAYRRHDLSLMSHGSQYGMHPDQRLLPGPSLGLAAAGADDLQGSVEAQCGIVLNGQGGVIRRGGTCVVNPTDLFCSVPGRLSLLSSTSKYKVTIAEVKRRLSPPECLNASLLGGILRRAKSKNGGRCLREKLDRLGLNLPAGRRKAANVTLLTSLVEGEALHLARDFGYTCETEFPAKAVGEHLARQHMEQKEQTARKKMILATKQICKEFQDLLSQDRSPLGSSRPTPILDLDIQRHLTHFSLITHGFGTPAICAALSTFQTVLSEMLNYLEKHTTHKNGGAADSGQGHANSEKAPLRKASEAAVKEGKTEKTD</sequence>
<accession>Q91ZK0</accession>
<accession>A7MCU6</accession>
<evidence type="ECO:0000250" key="1">
    <source>
        <dbReference type="UniProtKB" id="P05549"/>
    </source>
</evidence>
<evidence type="ECO:0000255" key="2"/>
<evidence type="ECO:0000256" key="3">
    <source>
        <dbReference type="SAM" id="MobiDB-lite"/>
    </source>
</evidence>
<evidence type="ECO:0000269" key="4">
    <source>
    </source>
</evidence>
<evidence type="ECO:0000269" key="5">
    <source>
    </source>
</evidence>
<evidence type="ECO:0000305" key="6"/>
<evidence type="ECO:0000312" key="7">
    <source>
        <dbReference type="EMBL" id="AAI52325.1"/>
    </source>
</evidence>
<evidence type="ECO:0000312" key="8">
    <source>
        <dbReference type="EMBL" id="AAL16940.1"/>
    </source>
</evidence>
<name>AP2D_MOUSE</name>
<feature type="chain" id="PRO_0000309514" description="Transcription factor AP-2-delta">
    <location>
        <begin position="1"/>
        <end position="452"/>
    </location>
</feature>
<feature type="region of interest" description="H-S-H (helix-span-helix), dimerization" evidence="2">
    <location>
        <begin position="280"/>
        <end position="410"/>
    </location>
</feature>
<feature type="region of interest" description="Disordered" evidence="3">
    <location>
        <begin position="416"/>
        <end position="452"/>
    </location>
</feature>
<feature type="compositionally biased region" description="Basic and acidic residues" evidence="3">
    <location>
        <begin position="429"/>
        <end position="452"/>
    </location>
</feature>
<feature type="modified residue" description="Phosphoserine; by PKA" evidence="1">
    <location>
        <position position="239"/>
    </location>
</feature>
<feature type="sequence conflict" description="In Ref. 2; AAI52326/AAI52325." evidence="6" ref="2">
    <original>T</original>
    <variation>A</variation>
    <location>
        <position position="37"/>
    </location>
</feature>
<organism>
    <name type="scientific">Mus musculus</name>
    <name type="common">Mouse</name>
    <dbReference type="NCBI Taxonomy" id="10090"/>
    <lineage>
        <taxon>Eukaryota</taxon>
        <taxon>Metazoa</taxon>
        <taxon>Chordata</taxon>
        <taxon>Craniata</taxon>
        <taxon>Vertebrata</taxon>
        <taxon>Euteleostomi</taxon>
        <taxon>Mammalia</taxon>
        <taxon>Eutheria</taxon>
        <taxon>Euarchontoglires</taxon>
        <taxon>Glires</taxon>
        <taxon>Rodentia</taxon>
        <taxon>Myomorpha</taxon>
        <taxon>Muroidea</taxon>
        <taxon>Muridae</taxon>
        <taxon>Murinae</taxon>
        <taxon>Mus</taxon>
        <taxon>Mus</taxon>
    </lineage>
</organism>
<proteinExistence type="evidence at protein level"/>
<protein>
    <recommendedName>
        <fullName>Transcription factor AP-2-delta</fullName>
        <shortName>AP2-delta</shortName>
    </recommendedName>
    <alternativeName>
        <fullName>Activating enhancer-binding protein 2-delta</fullName>
    </alternativeName>
</protein>
<reference evidence="6 8" key="1">
    <citation type="journal article" date="2001" name="J. Biol. Chem.">
        <title>Cloning and characterization of a novel mouse AP-2 transcription factor, AP-2delta, with unique DNA binding and transactivation properties.</title>
        <authorList>
            <person name="Zhao F."/>
            <person name="Satoda M."/>
            <person name="Licht J.D."/>
            <person name="Hayashizaki Y."/>
            <person name="Gelb B.D."/>
        </authorList>
    </citation>
    <scope>NUCLEOTIDE SEQUENCE [MRNA]</scope>
    <scope>FUNCTION</scope>
    <scope>SUBUNIT</scope>
    <scope>TISSUE SPECIFICITY</scope>
    <source>
        <strain evidence="8">C57BL/6J</strain>
        <tissue evidence="4">Fetal head</tissue>
    </source>
</reference>
<reference evidence="7" key="2">
    <citation type="journal article" date="2004" name="Genome Res.">
        <title>The status, quality, and expansion of the NIH full-length cDNA project: the Mammalian Gene Collection (MGC).</title>
        <authorList>
            <consortium name="The MGC Project Team"/>
        </authorList>
    </citation>
    <scope>NUCLEOTIDE SEQUENCE [LARGE SCALE MRNA]</scope>
</reference>
<reference evidence="6" key="3">
    <citation type="journal article" date="2003" name="Gene Expr. Patterns">
        <title>Expression of Tfap2d, the gene encoding the transcription factor Ap-2 delta, during mouse embryogenesis.</title>
        <authorList>
            <person name="Zhao F."/>
            <person name="Lufkin T."/>
            <person name="Gelb B.D."/>
        </authorList>
    </citation>
    <scope>DEVELOPMENTAL STAGE</scope>
</reference>
<gene>
    <name type="primary">Tfap2d</name>
    <name type="synonym">Tcfap2d</name>
</gene>
<keyword id="KW-0010">Activator</keyword>
<keyword id="KW-0238">DNA-binding</keyword>
<keyword id="KW-0539">Nucleus</keyword>
<keyword id="KW-0597">Phosphoprotein</keyword>
<keyword id="KW-1185">Reference proteome</keyword>
<keyword id="KW-0804">Transcription</keyword>
<keyword id="KW-0805">Transcription regulation</keyword>
<comment type="function">
    <text evidence="4 6">Sequence-specific DNA-binding protein that interacts with inducible viral and cellular enhancer elements to regulate transcription of selected genes. AP-2 factors bind to the consensus sequence 5'-GCCNNNGGC-3' and activate genes involved in a large spectrum of important biological functions including proper eye, face, body wall, limb and neural tube development. They also suppress a number of genes including MCAM/MUC18, C/EBP alpha and MYC.</text>
</comment>
<comment type="subunit">
    <text evidence="4">Binds DNA as a dimer. Can form homodimers or heterodimers with other AP-2 family members.</text>
</comment>
<comment type="interaction">
    <interactant intactId="EBI-15703453">
        <id>Q91ZK0</id>
    </interactant>
    <interactant intactId="EBI-1556554">
        <id>Q91X20</id>
        <label>Ash2l</label>
    </interactant>
    <organismsDiffer>false</organismsDiffer>
    <experiments>4</experiments>
</comment>
<comment type="subcellular location">
    <subcellularLocation>
        <location evidence="6">Nucleus</location>
    </subcellularLocation>
</comment>
<comment type="tissue specificity">
    <text evidence="4">Expressed in both embryonic and newborn brain.</text>
</comment>
<comment type="developmental stage">
    <text evidence="5">Expression is first detected at 9.5 dpc in the central nervous system and the developing heart. The signal detected in heart persists through to 10.5 dpc. Diffusely expressed in developing brain at 10.5 dpc to 11.5 dpc, but by 13.5 dpc expression is mostly confined to the midbrain and forebrain. Also expressed in the spinal cord at 10.5 dpc, and in retinal epithelium from 13.5 dpc to 16.5 dpc. No signals detected in tissues such as the neural crest, facial mesenchyme, and limbs where other Tfap2 genes are expressed.</text>
</comment>
<comment type="similarity">
    <text evidence="2">Belongs to the AP-2 family.</text>
</comment>
<dbReference type="EMBL" id="AF421891">
    <property type="protein sequence ID" value="AAL16940.1"/>
    <property type="molecule type" value="mRNA"/>
</dbReference>
<dbReference type="EMBL" id="BC152324">
    <property type="protein sequence ID" value="AAI52325.1"/>
    <property type="molecule type" value="mRNA"/>
</dbReference>
<dbReference type="EMBL" id="BC152325">
    <property type="protein sequence ID" value="AAI52326.1"/>
    <property type="molecule type" value="mRNA"/>
</dbReference>
<dbReference type="CCDS" id="CCDS14838.1"/>
<dbReference type="RefSeq" id="NP_694794.1">
    <property type="nucleotide sequence ID" value="NM_153154.3"/>
</dbReference>
<dbReference type="SMR" id="Q91ZK0"/>
<dbReference type="BioGRID" id="230568">
    <property type="interactions" value="14"/>
</dbReference>
<dbReference type="DIP" id="DIP-46108N"/>
<dbReference type="FunCoup" id="Q91ZK0">
    <property type="interactions" value="381"/>
</dbReference>
<dbReference type="IntAct" id="Q91ZK0">
    <property type="interactions" value="3"/>
</dbReference>
<dbReference type="STRING" id="10090.ENSMUSP00000037699"/>
<dbReference type="PhosphoSitePlus" id="Q91ZK0"/>
<dbReference type="PaxDb" id="10090-ENSMUSP00000037699"/>
<dbReference type="PeptideAtlas" id="Q91ZK0"/>
<dbReference type="ProteomicsDB" id="281785"/>
<dbReference type="Pumba" id="Q91ZK0"/>
<dbReference type="Antibodypedia" id="30864">
    <property type="antibodies" value="138 antibodies from 24 providers"/>
</dbReference>
<dbReference type="DNASU" id="226896"/>
<dbReference type="Ensembl" id="ENSMUST00000037294.8">
    <property type="protein sequence ID" value="ENSMUSP00000037699.8"/>
    <property type="gene ID" value="ENSMUSG00000042596.8"/>
</dbReference>
<dbReference type="GeneID" id="226896"/>
<dbReference type="KEGG" id="mmu:226896"/>
<dbReference type="UCSC" id="uc007akp.1">
    <property type="organism name" value="mouse"/>
</dbReference>
<dbReference type="AGR" id="MGI:2153466"/>
<dbReference type="CTD" id="83741"/>
<dbReference type="MGI" id="MGI:2153466">
    <property type="gene designation" value="Tfap2d"/>
</dbReference>
<dbReference type="VEuPathDB" id="HostDB:ENSMUSG00000042596"/>
<dbReference type="eggNOG" id="KOG3811">
    <property type="taxonomic scope" value="Eukaryota"/>
</dbReference>
<dbReference type="GeneTree" id="ENSGT00950000182848"/>
<dbReference type="HOGENOM" id="CLU_035175_5_0_1"/>
<dbReference type="InParanoid" id="Q91ZK0"/>
<dbReference type="OMA" id="HYEFQHG"/>
<dbReference type="OrthoDB" id="6252992at2759"/>
<dbReference type="PhylomeDB" id="Q91ZK0"/>
<dbReference type="TreeFam" id="TF313718"/>
<dbReference type="Reactome" id="R-MMU-8866904">
    <property type="pathway name" value="Negative regulation of activity of TFAP2 (AP-2) family transcription factors"/>
</dbReference>
<dbReference type="Reactome" id="R-MMU-8866907">
    <property type="pathway name" value="Activation of the TFAP2 (AP-2) family of transcription factors"/>
</dbReference>
<dbReference type="BioGRID-ORCS" id="226896">
    <property type="hits" value="3 hits in 76 CRISPR screens"/>
</dbReference>
<dbReference type="PRO" id="PR:Q91ZK0"/>
<dbReference type="Proteomes" id="UP000000589">
    <property type="component" value="Chromosome 1"/>
</dbReference>
<dbReference type="RNAct" id="Q91ZK0">
    <property type="molecule type" value="protein"/>
</dbReference>
<dbReference type="Bgee" id="ENSMUSG00000042596">
    <property type="expression patterns" value="Expressed in ureteric bud trunk and 59 other cell types or tissues"/>
</dbReference>
<dbReference type="GO" id="GO:0005634">
    <property type="term" value="C:nucleus"/>
    <property type="evidence" value="ECO:0007669"/>
    <property type="project" value="UniProtKB-SubCell"/>
</dbReference>
<dbReference type="GO" id="GO:0005667">
    <property type="term" value="C:transcription regulator complex"/>
    <property type="evidence" value="ECO:0000353"/>
    <property type="project" value="MGI"/>
</dbReference>
<dbReference type="GO" id="GO:0000981">
    <property type="term" value="F:DNA-binding transcription factor activity, RNA polymerase II-specific"/>
    <property type="evidence" value="ECO:0000314"/>
    <property type="project" value="MGI"/>
</dbReference>
<dbReference type="GO" id="GO:0000977">
    <property type="term" value="F:RNA polymerase II transcription regulatory region sequence-specific DNA binding"/>
    <property type="evidence" value="ECO:0000314"/>
    <property type="project" value="MGI"/>
</dbReference>
<dbReference type="GO" id="GO:0061379">
    <property type="term" value="P:inferior colliculus development"/>
    <property type="evidence" value="ECO:0000315"/>
    <property type="project" value="MGI"/>
</dbReference>
<dbReference type="GO" id="GO:0043524">
    <property type="term" value="P:negative regulation of neuron apoptotic process"/>
    <property type="evidence" value="ECO:0000315"/>
    <property type="project" value="MGI"/>
</dbReference>
<dbReference type="GO" id="GO:0045893">
    <property type="term" value="P:positive regulation of DNA-templated transcription"/>
    <property type="evidence" value="ECO:0000314"/>
    <property type="project" value="MGI"/>
</dbReference>
<dbReference type="GO" id="GO:0045944">
    <property type="term" value="P:positive regulation of transcription by RNA polymerase II"/>
    <property type="evidence" value="ECO:0000314"/>
    <property type="project" value="MGI"/>
</dbReference>
<dbReference type="GO" id="GO:0006366">
    <property type="term" value="P:transcription by RNA polymerase II"/>
    <property type="evidence" value="ECO:0000314"/>
    <property type="project" value="MGI"/>
</dbReference>
<dbReference type="InterPro" id="IPR004979">
    <property type="entry name" value="TF_AP2"/>
</dbReference>
<dbReference type="InterPro" id="IPR013854">
    <property type="entry name" value="TF_AP2_C"/>
</dbReference>
<dbReference type="PANTHER" id="PTHR10812">
    <property type="entry name" value="TRANSCRIPTION FACTOR AP-2"/>
    <property type="match status" value="1"/>
</dbReference>
<dbReference type="PANTHER" id="PTHR10812:SF5">
    <property type="entry name" value="TRANSCRIPTION FACTOR AP-2-DELTA"/>
    <property type="match status" value="1"/>
</dbReference>
<dbReference type="Pfam" id="PF03299">
    <property type="entry name" value="TF_AP-2"/>
    <property type="match status" value="1"/>
</dbReference>
<dbReference type="PRINTS" id="PR01748">
    <property type="entry name" value="AP2TNSCPFCT"/>
</dbReference>